<organism>
    <name type="scientific">Mycobacterium bovis (strain ATCC BAA-935 / AF2122/97)</name>
    <dbReference type="NCBI Taxonomy" id="233413"/>
    <lineage>
        <taxon>Bacteria</taxon>
        <taxon>Bacillati</taxon>
        <taxon>Actinomycetota</taxon>
        <taxon>Actinomycetes</taxon>
        <taxon>Mycobacteriales</taxon>
        <taxon>Mycobacteriaceae</taxon>
        <taxon>Mycobacterium</taxon>
        <taxon>Mycobacterium tuberculosis complex</taxon>
    </lineage>
</organism>
<accession>P59801</accession>
<accession>A0A1R3Y2P9</accession>
<accession>X2BLL3</accession>
<feature type="chain" id="PRO_0000075511" description="Insertion element IS6110 uncharacterized 12.0 kDa protein">
    <location>
        <begin position="1"/>
        <end position="108"/>
    </location>
</feature>
<sequence>MSGGSSRRYPPELRERAVRMVAEIRGQHDSEWAAISEVARLLGVGCAETVRKWVRQAQVDAGARPGTTTEESAELKRLRRDNAELRRANAILKTASAFFAAELDRPAR</sequence>
<proteinExistence type="inferred from homology"/>
<name>YIA4_MYCBO</name>
<reference key="1">
    <citation type="journal article" date="2003" name="Proc. Natl. Acad. Sci. U.S.A.">
        <title>The complete genome sequence of Mycobacterium bovis.</title>
        <authorList>
            <person name="Garnier T."/>
            <person name="Eiglmeier K."/>
            <person name="Camus J.-C."/>
            <person name="Medina N."/>
            <person name="Mansoor H."/>
            <person name="Pryor M."/>
            <person name="Duthoy S."/>
            <person name="Grondin S."/>
            <person name="Lacroix C."/>
            <person name="Monsempe C."/>
            <person name="Simon S."/>
            <person name="Harris B."/>
            <person name="Atkin R."/>
            <person name="Doggett J."/>
            <person name="Mayes R."/>
            <person name="Keating L."/>
            <person name="Wheeler P.R."/>
            <person name="Parkhill J."/>
            <person name="Barrell B.G."/>
            <person name="Cole S.T."/>
            <person name="Gordon S.V."/>
            <person name="Hewinson R.G."/>
        </authorList>
    </citation>
    <scope>NUCLEOTIDE SEQUENCE [LARGE SCALE GENOMIC DNA]</scope>
    <source>
        <strain>ATCC BAA-935 / AF2122/97</strain>
    </source>
</reference>
<reference key="2">
    <citation type="journal article" date="2017" name="Genome Announc.">
        <title>Updated reference genome sequence and annotation of Mycobacterium bovis AF2122/97.</title>
        <authorList>
            <person name="Malone K.M."/>
            <person name="Farrell D."/>
            <person name="Stuber T.P."/>
            <person name="Schubert O.T."/>
            <person name="Aebersold R."/>
            <person name="Robbe-Austerman S."/>
            <person name="Gordon S.V."/>
        </authorList>
    </citation>
    <scope>NUCLEOTIDE SEQUENCE [LARGE SCALE GENOMIC DNA]</scope>
    <scope>GENOME REANNOTATION</scope>
    <source>
        <strain>ATCC BAA-935 / AF2122/97</strain>
    </source>
</reference>
<dbReference type="EMBL" id="LT708304">
    <property type="protein sequence ID" value="SIU01458.1"/>
    <property type="molecule type" value="Genomic_DNA"/>
</dbReference>
<dbReference type="RefSeq" id="NP_856484.1">
    <property type="nucleotide sequence ID" value="NC_002945.3"/>
</dbReference>
<dbReference type="SMR" id="P59801"/>
<dbReference type="KEGG" id="mbo:BQ2027_MB2839C"/>
<dbReference type="PATRIC" id="fig|233413.5.peg.3114"/>
<dbReference type="Proteomes" id="UP000001419">
    <property type="component" value="Chromosome"/>
</dbReference>
<dbReference type="GO" id="GO:0003677">
    <property type="term" value="F:DNA binding"/>
    <property type="evidence" value="ECO:0007669"/>
    <property type="project" value="InterPro"/>
</dbReference>
<dbReference type="GO" id="GO:0004803">
    <property type="term" value="F:transposase activity"/>
    <property type="evidence" value="ECO:0007669"/>
    <property type="project" value="InterPro"/>
</dbReference>
<dbReference type="GO" id="GO:0006313">
    <property type="term" value="P:DNA transposition"/>
    <property type="evidence" value="ECO:0007669"/>
    <property type="project" value="InterPro"/>
</dbReference>
<dbReference type="Gene3D" id="1.10.10.10">
    <property type="entry name" value="Winged helix-like DNA-binding domain superfamily/Winged helix DNA-binding domain"/>
    <property type="match status" value="1"/>
</dbReference>
<dbReference type="InterPro" id="IPR009057">
    <property type="entry name" value="Homeodomain-like_sf"/>
</dbReference>
<dbReference type="InterPro" id="IPR002514">
    <property type="entry name" value="Transposase_8"/>
</dbReference>
<dbReference type="InterPro" id="IPR036388">
    <property type="entry name" value="WH-like_DNA-bd_sf"/>
</dbReference>
<dbReference type="Pfam" id="PF01527">
    <property type="entry name" value="HTH_Tnp_1"/>
    <property type="match status" value="1"/>
</dbReference>
<dbReference type="SUPFAM" id="SSF46689">
    <property type="entry name" value="Homeodomain-like"/>
    <property type="match status" value="1"/>
</dbReference>
<protein>
    <recommendedName>
        <fullName>Insertion element IS6110 uncharacterized 12.0 kDa protein</fullName>
    </recommendedName>
</protein>
<keyword id="KW-1185">Reference proteome</keyword>
<keyword id="KW-0814">Transposable element</keyword>
<gene>
    <name type="ordered locus">BQ2027_MB2839C</name>
</gene>
<comment type="similarity">
    <text evidence="1">Belongs to the transposase 8 family.</text>
</comment>
<evidence type="ECO:0000305" key="1"/>